<evidence type="ECO:0000250" key="1">
    <source>
        <dbReference type="UniProtKB" id="A0A0D4WTV1"/>
    </source>
</evidence>
<evidence type="ECO:0000250" key="2">
    <source>
        <dbReference type="UniProtKB" id="A0A0D4WV12"/>
    </source>
</evidence>
<evidence type="ECO:0000250" key="3">
    <source>
        <dbReference type="UniProtKB" id="P0CE80"/>
    </source>
</evidence>
<evidence type="ECO:0000250" key="4">
    <source>
        <dbReference type="UniProtKB" id="Q4ZFU2"/>
    </source>
</evidence>
<evidence type="ECO:0000250" key="5">
    <source>
        <dbReference type="UniProtKB" id="Q8I914"/>
    </source>
</evidence>
<evidence type="ECO:0000255" key="6"/>
<evidence type="ECO:0000269" key="7">
    <source>
    </source>
</evidence>
<evidence type="ECO:0000269" key="8">
    <source>
    </source>
</evidence>
<evidence type="ECO:0000269" key="9">
    <source>
    </source>
</evidence>
<evidence type="ECO:0000269" key="10">
    <source>
    </source>
</evidence>
<evidence type="ECO:0000303" key="11">
    <source>
    </source>
</evidence>
<evidence type="ECO:0000303" key="12">
    <source>
    </source>
</evidence>
<evidence type="ECO:0000303" key="13">
    <source>
    </source>
</evidence>
<evidence type="ECO:0000305" key="14"/>
<evidence type="ECO:0000305" key="15">
    <source>
    </source>
</evidence>
<evidence type="ECO:0000305" key="16">
    <source>
    </source>
</evidence>
<name>A1IA2_LOXIN</name>
<reference key="1">
    <citation type="journal article" date="2006" name="Biochimie">
        <title>Molecular cloning and functional characterization of two isoforms of dermonecrotic toxin from Loxosceles intermedia (Brown spider) venom gland.</title>
        <authorList>
            <person name="da Silveira R.B."/>
            <person name="Pigozzo R.B."/>
            <person name="Chaim O.M."/>
            <person name="Appel M.H."/>
            <person name="Dreyfuss J.L."/>
            <person name="Toma L."/>
            <person name="Mangili O.C."/>
            <person name="Gremski W."/>
            <person name="Dietrich C.P."/>
            <person name="Nader H.B."/>
            <person name="Veiga S.S."/>
        </authorList>
    </citation>
    <scope>NUCLEOTIDE SEQUENCE [MRNA]</scope>
    <scope>CATALYTIC ACTIVITY</scope>
    <scope>FUNCTION</scope>
    <source>
        <tissue>Venom gland</tissue>
    </source>
</reference>
<reference key="2">
    <citation type="journal article" date="1998" name="Biochem. Biophys. Res. Commun.">
        <title>Sphingomyelinases in the venom of the spider Loxosceles intermedia are responsible for both dermonecrosis and complement-dependent hemolysis.</title>
        <authorList>
            <person name="Tambourgi D.V."/>
            <person name="Magnoli F.C."/>
            <person name="van den Berg C.W."/>
            <person name="Morgan B.P."/>
            <person name="de Araujo P.S."/>
            <person name="Alves E.W."/>
            <person name="Da Silva W.D."/>
        </authorList>
    </citation>
    <scope>PROTEIN SEQUENCE OF 27-55</scope>
    <scope>FUNCTION</scope>
    <scope>CATALYTIC ACTIVITY</scope>
    <scope>SUBCELLULAR LOCATION</scope>
    <source>
        <tissue>Venom</tissue>
    </source>
</reference>
<reference key="3">
    <citation type="journal article" date="2007" name="Toxicon">
        <title>Biological and structural comparison of recombinant phospholipase D toxins from Loxosceles intermedia (brown spider) venom.</title>
        <authorList>
            <person name="Ribeiro R.O."/>
            <person name="Chaim O.M."/>
            <person name="da Silveira R.B."/>
            <person name="Gremski L.H."/>
            <person name="Sade Y.B."/>
            <person name="Paludo K.S."/>
            <person name="Senff-Ribeiro A."/>
            <person name="de Moura J."/>
            <person name="Chavez-Olortegui C."/>
            <person name="Gremski W."/>
            <person name="Nader H.B."/>
            <person name="Veiga S.S."/>
        </authorList>
    </citation>
    <scope>FUNCTION</scope>
    <scope>BIOASSAY</scope>
</reference>
<reference key="4">
    <citation type="journal article" date="2011" name="J. Cell. Biochem.">
        <title>The relationship between calcium and the metabolism of plasma membrane phospholipids in hemolysis induced by brown spider venom phospholipase-D toxin.</title>
        <authorList>
            <person name="Chaves-Moreira D."/>
            <person name="Souza F.N."/>
            <person name="Fogaca R.T."/>
            <person name="Mangili O.C."/>
            <person name="Gremski W."/>
            <person name="Senff-Ribeiro A."/>
            <person name="Chaim O.M."/>
            <person name="Veiga S.S."/>
        </authorList>
    </citation>
    <scope>FUNCTION</scope>
</reference>
<keyword id="KW-0204">Cytolysis</keyword>
<keyword id="KW-1061">Dermonecrotic toxin</keyword>
<keyword id="KW-0903">Direct protein sequencing</keyword>
<keyword id="KW-1015">Disulfide bond</keyword>
<keyword id="KW-0325">Glycoprotein</keyword>
<keyword id="KW-0354">Hemolysis</keyword>
<keyword id="KW-0442">Lipid degradation</keyword>
<keyword id="KW-0443">Lipid metabolism</keyword>
<keyword id="KW-0456">Lyase</keyword>
<keyword id="KW-0460">Magnesium</keyword>
<keyword id="KW-0479">Metal-binding</keyword>
<keyword id="KW-0964">Secreted</keyword>
<keyword id="KW-0800">Toxin</keyword>
<keyword id="KW-0865">Zymogen</keyword>
<feature type="propeptide" id="PRO_0000392749">
    <location>
        <begin position="1" status="less than"/>
        <end position="5"/>
    </location>
</feature>
<feature type="chain" id="PRO_0000392750" description="Dermonecrotic toxin LiSicTox-alphaIA2aii">
    <location>
        <begin position="6"/>
        <end position="285"/>
    </location>
</feature>
<feature type="active site" evidence="5">
    <location>
        <position position="17"/>
    </location>
</feature>
<feature type="active site" description="Nucleophile" evidence="5">
    <location>
        <position position="53"/>
    </location>
</feature>
<feature type="binding site" evidence="5">
    <location>
        <position position="37"/>
    </location>
    <ligand>
        <name>Mg(2+)</name>
        <dbReference type="ChEBI" id="CHEBI:18420"/>
    </ligand>
</feature>
<feature type="binding site" evidence="5">
    <location>
        <position position="39"/>
    </location>
    <ligand>
        <name>Mg(2+)</name>
        <dbReference type="ChEBI" id="CHEBI:18420"/>
    </ligand>
</feature>
<feature type="binding site" evidence="5">
    <location>
        <position position="97"/>
    </location>
    <ligand>
        <name>Mg(2+)</name>
        <dbReference type="ChEBI" id="CHEBI:18420"/>
    </ligand>
</feature>
<feature type="glycosylation site" description="N-linked (GlcNAc...) asparagine" evidence="6">
    <location>
        <position position="262"/>
    </location>
</feature>
<feature type="disulfide bond" evidence="3">
    <location>
        <begin position="57"/>
        <end position="63"/>
    </location>
</feature>
<feature type="disulfide bond" evidence="3">
    <location>
        <begin position="59"/>
        <end position="202"/>
    </location>
</feature>
<feature type="non-terminal residue">
    <location>
        <position position="1"/>
    </location>
</feature>
<organism>
    <name type="scientific">Loxosceles intermedia</name>
    <name type="common">Brown spider</name>
    <dbReference type="NCBI Taxonomy" id="58218"/>
    <lineage>
        <taxon>Eukaryota</taxon>
        <taxon>Metazoa</taxon>
        <taxon>Ecdysozoa</taxon>
        <taxon>Arthropoda</taxon>
        <taxon>Chelicerata</taxon>
        <taxon>Arachnida</taxon>
        <taxon>Araneae</taxon>
        <taxon>Araneomorphae</taxon>
        <taxon>Haplogynae</taxon>
        <taxon>Scytodoidea</taxon>
        <taxon>Sicariidae</taxon>
        <taxon>Loxosceles</taxon>
    </lineage>
</organism>
<protein>
    <recommendedName>
        <fullName>Dermonecrotic toxin LiSicTox-alphaIA2aii</fullName>
        <ecNumber evidence="4">4.6.1.-</ecNumber>
    </recommendedName>
    <alternativeName>
        <fullName>Dermonecrotic toxin 2</fullName>
        <shortName evidence="12">DT2</shortName>
        <shortName evidence="11 12">LiRecDT2</shortName>
    </alternativeName>
    <alternativeName>
        <fullName>LiP2</fullName>
        <shortName evidence="13">P2</shortName>
    </alternativeName>
    <alternativeName>
        <fullName>Phospholipase D</fullName>
        <shortName>PLD</shortName>
    </alternativeName>
    <alternativeName>
        <fullName>Sphingomyelin phosphodiesterase D 2</fullName>
        <shortName>SMD 2</shortName>
        <shortName>SMase D 2</shortName>
        <shortName>Sphingomyelinase D 2</shortName>
    </alternativeName>
</protein>
<sequence length="285" mass="31920">DVEERADKRRPIWIMGHMVNAIAQIDEFVNLGANSIETDVSFDDNANPEYTYHGIPCDCGRSCLKWENFNDFLKGLRSATTPGNAKYQAKLILVVFDLKTGSLYDNQANEAGKKLAKNLLKHYWNNGNNGGRAYIVLSIPDLNHYPLIKGFKDQLTQDGHPELMDKVGHDFSGNDAIGDVGNAYKKAGISGHVWQSDGITNCLLRGLDRVKQAIANRDSANGFINKVYYWTVDKRATTRDALDAGVDGVMTNYPDVITDVLNESAYKNKFRVASYEDNPWETFKK</sequence>
<dbReference type="EC" id="4.6.1.-" evidence="4"/>
<dbReference type="EMBL" id="DQ266399">
    <property type="protein sequence ID" value="ABB69098.1"/>
    <property type="molecule type" value="mRNA"/>
</dbReference>
<dbReference type="SMR" id="P0CE84"/>
<dbReference type="GO" id="GO:0005576">
    <property type="term" value="C:extracellular region"/>
    <property type="evidence" value="ECO:0007669"/>
    <property type="project" value="UniProtKB-SubCell"/>
</dbReference>
<dbReference type="GO" id="GO:0016829">
    <property type="term" value="F:lyase activity"/>
    <property type="evidence" value="ECO:0007669"/>
    <property type="project" value="UniProtKB-KW"/>
</dbReference>
<dbReference type="GO" id="GO:0046872">
    <property type="term" value="F:metal ion binding"/>
    <property type="evidence" value="ECO:0007669"/>
    <property type="project" value="UniProtKB-KW"/>
</dbReference>
<dbReference type="GO" id="GO:0008081">
    <property type="term" value="F:phosphoric diester hydrolase activity"/>
    <property type="evidence" value="ECO:0007669"/>
    <property type="project" value="InterPro"/>
</dbReference>
<dbReference type="GO" id="GO:0090729">
    <property type="term" value="F:toxin activity"/>
    <property type="evidence" value="ECO:0007669"/>
    <property type="project" value="UniProtKB-KW"/>
</dbReference>
<dbReference type="GO" id="GO:0031640">
    <property type="term" value="P:killing of cells of another organism"/>
    <property type="evidence" value="ECO:0007669"/>
    <property type="project" value="UniProtKB-KW"/>
</dbReference>
<dbReference type="GO" id="GO:0016042">
    <property type="term" value="P:lipid catabolic process"/>
    <property type="evidence" value="ECO:0007669"/>
    <property type="project" value="UniProtKB-KW"/>
</dbReference>
<dbReference type="CDD" id="cd08576">
    <property type="entry name" value="GDPD_like_SMaseD_PLD"/>
    <property type="match status" value="1"/>
</dbReference>
<dbReference type="Gene3D" id="3.20.20.190">
    <property type="entry name" value="Phosphatidylinositol (PI) phosphodiesterase"/>
    <property type="match status" value="1"/>
</dbReference>
<dbReference type="InterPro" id="IPR017946">
    <property type="entry name" value="PLC-like_Pdiesterase_TIM-brl"/>
</dbReference>
<dbReference type="Pfam" id="PF13653">
    <property type="entry name" value="GDPD_2"/>
    <property type="match status" value="1"/>
</dbReference>
<dbReference type="SUPFAM" id="SSF51695">
    <property type="entry name" value="PLC-like phosphodiesterases"/>
    <property type="match status" value="1"/>
</dbReference>
<proteinExistence type="evidence at protein level"/>
<comment type="function">
    <text evidence="1 3 7 8 9 10">Dermonecrotic toxins cleave the phosphodiester linkage between the phosphate and headgroup of certain phospholipids (sphingolipid and lysolipid substrates), forming an alcohol (often choline) and a cyclic phosphate (By similarity). This toxin acts on sphingomyelin (SM) with high activity (PubMed:16581177, PubMed:9790962). It may also act on ceramide phosphoethanolamine (CPE), lysophosphatidylcholine (LPC) and lysophosphatidylethanolamine (LPE), but not on lysophosphatidylserine (LPS), and lysophosphatidylglycerol (LPG) (By similarity). It acts by transphosphatidylation, releasing exclusively cyclic phosphate products as second products (By similarity). Shows high hemolytic activity. Induces dermonecrosis, vascular permeability, edema, inflammatory response, and platelet aggregation (PubMed:16581177, PubMed:17900646). Also shows cytotoxicity against renal epithelial cells (PubMed:17900646). In addition, also induces hemolysis in a complement-dependent manner and probably also in a complement-independent manner (PubMed:17900646, PubMed:9790962). The hemolysis provoked in a complement-independent manner may be composed of several steps (By similarity). The toxin may bind to erythrocyte membranes, may hydrolyze membrane phospholipids (SM and LPC) thus generating metabolism products that may cause hemolysis, probably by provoking an increase of calcium inside cells (By similarity). The calcium influx may be due to the opening of L-type calcium channels, since L-type calcium channel blockers inhibit calcium influx (By similarity). In vivo, is lethal to mice when intraperitoneally injected (PubMed:17900646).</text>
</comment>
<comment type="catalytic activity">
    <reaction evidence="15 16">
        <text>an N-(acyl)-sphingosylphosphocholine = an N-(acyl)-sphingosyl-1,3-cyclic phosphate + choline</text>
        <dbReference type="Rhea" id="RHEA:60652"/>
        <dbReference type="ChEBI" id="CHEBI:15354"/>
        <dbReference type="ChEBI" id="CHEBI:64583"/>
        <dbReference type="ChEBI" id="CHEBI:143892"/>
    </reaction>
</comment>
<comment type="catalytic activity">
    <reaction evidence="1">
        <text>an N-(acyl)-sphingosylphosphoethanolamine = an N-(acyl)-sphingosyl-1,3-cyclic phosphate + ethanolamine</text>
        <dbReference type="Rhea" id="RHEA:60648"/>
        <dbReference type="ChEBI" id="CHEBI:57603"/>
        <dbReference type="ChEBI" id="CHEBI:143891"/>
        <dbReference type="ChEBI" id="CHEBI:143892"/>
    </reaction>
</comment>
<comment type="catalytic activity">
    <reaction evidence="1">
        <text>a 1-acyl-sn-glycero-3-phosphocholine = a 1-acyl-sn-glycero-2,3-cyclic phosphate + choline</text>
        <dbReference type="Rhea" id="RHEA:60700"/>
        <dbReference type="ChEBI" id="CHEBI:15354"/>
        <dbReference type="ChEBI" id="CHEBI:58168"/>
        <dbReference type="ChEBI" id="CHEBI:143947"/>
    </reaction>
</comment>
<comment type="catalytic activity">
    <reaction evidence="1">
        <text>a 1-acyl-sn-glycero-3-phosphoethanolamine = a 1-acyl-sn-glycero-2,3-cyclic phosphate + ethanolamine</text>
        <dbReference type="Rhea" id="RHEA:60704"/>
        <dbReference type="ChEBI" id="CHEBI:57603"/>
        <dbReference type="ChEBI" id="CHEBI:64381"/>
        <dbReference type="ChEBI" id="CHEBI:143947"/>
    </reaction>
</comment>
<comment type="cofactor">
    <cofactor evidence="5">
        <name>Mg(2+)</name>
        <dbReference type="ChEBI" id="CHEBI:18420"/>
    </cofactor>
    <text evidence="5">Binds 1 Mg(2+) ion per subunit.</text>
</comment>
<comment type="subcellular location">
    <subcellularLocation>
        <location evidence="10">Secreted</location>
    </subcellularLocation>
</comment>
<comment type="tissue specificity">
    <text evidence="16">Expressed by the venom gland.</text>
</comment>
<comment type="similarity">
    <text evidence="14">Belongs to the arthropod phospholipase D family. Class II subfamily. Class IIa sub-subfamily.</text>
</comment>
<comment type="caution">
    <text evidence="1 2 4">The most common activity assay for dermonecrotic toxins detects enzymatic activity by monitoring choline release from substrate. Liberation of choline from sphingomyelin (SM) or lysophosphatidylcholine (LPC) is commonly assumed to result from substrate hydrolysis, giving either ceramide-1-phosphate (C1P) or lysophosphatidic acid (LPA), respectively, as a second product. However, two studies from Lajoie and colleagues (2013 and 2015) report the observation of exclusive formation of cyclic phosphate products as second products, resulting from intramolecular transphosphatidylation. Cyclic phosphates have vastly different biological properties from their monoester counterparts, and they may be relevant to the pathology of brown spider envenomation.</text>
</comment>
<accession>P0CE84</accession>
<accession>P83046</accession>
<accession>Q2XQV2</accession>
<accession>Q6W8Q4</accession>